<keyword id="KW-0002">3D-structure</keyword>
<keyword id="KW-0032">Aminotransferase</keyword>
<keyword id="KW-0903">Direct protein sequencing</keyword>
<keyword id="KW-0663">Pyridoxal phosphate</keyword>
<keyword id="KW-1185">Reference proteome</keyword>
<keyword id="KW-0808">Transferase</keyword>
<name>GABT_ECOLI</name>
<organism>
    <name type="scientific">Escherichia coli (strain K12)</name>
    <dbReference type="NCBI Taxonomy" id="83333"/>
    <lineage>
        <taxon>Bacteria</taxon>
        <taxon>Pseudomonadati</taxon>
        <taxon>Pseudomonadota</taxon>
        <taxon>Gammaproteobacteria</taxon>
        <taxon>Enterobacterales</taxon>
        <taxon>Enterobacteriaceae</taxon>
        <taxon>Escherichia</taxon>
    </lineage>
</organism>
<reference key="1">
    <citation type="journal article" date="1990" name="J. Bacteriol.">
        <title>Molecular analysis of two genes of the Escherichia coli gab cluster: nucleotide sequence of the glutamate:succinic semialdehyde transaminase gene (gabT) and characterization of the succinic semialdehyde dehydrogenase gene (gabD).</title>
        <authorList>
            <person name="Bartsch K."/>
            <person name="von Johnn-Marteville A."/>
            <person name="Schulz A."/>
        </authorList>
    </citation>
    <scope>NUCLEOTIDE SEQUENCE [GENOMIC DNA]</scope>
    <source>
        <strain>K12</strain>
    </source>
</reference>
<reference key="2">
    <citation type="journal article" date="1997" name="DNA Res.">
        <title>Construction of a contiguous 874-kb sequence of the Escherichia coli-K12 genome corresponding to 50.0-68.8 min on the linkage map and analysis of its sequence features.</title>
        <authorList>
            <person name="Yamamoto Y."/>
            <person name="Aiba H."/>
            <person name="Baba T."/>
            <person name="Hayashi K."/>
            <person name="Inada T."/>
            <person name="Isono K."/>
            <person name="Itoh T."/>
            <person name="Kimura S."/>
            <person name="Kitagawa M."/>
            <person name="Makino K."/>
            <person name="Miki T."/>
            <person name="Mitsuhashi N."/>
            <person name="Mizobuchi K."/>
            <person name="Mori H."/>
            <person name="Nakade S."/>
            <person name="Nakamura Y."/>
            <person name="Nashimoto H."/>
            <person name="Oshima T."/>
            <person name="Oyama S."/>
            <person name="Saito N."/>
            <person name="Sampei G."/>
            <person name="Satoh Y."/>
            <person name="Sivasundaram S."/>
            <person name="Tagami H."/>
            <person name="Takahashi H."/>
            <person name="Takeda J."/>
            <person name="Takemoto K."/>
            <person name="Uehara K."/>
            <person name="Wada C."/>
            <person name="Yamagata S."/>
            <person name="Horiuchi T."/>
        </authorList>
    </citation>
    <scope>NUCLEOTIDE SEQUENCE [LARGE SCALE GENOMIC DNA]</scope>
    <source>
        <strain>K12 / W3110 / ATCC 27325 / DSM 5911</strain>
    </source>
</reference>
<reference key="3">
    <citation type="journal article" date="1997" name="Science">
        <title>The complete genome sequence of Escherichia coli K-12.</title>
        <authorList>
            <person name="Blattner F.R."/>
            <person name="Plunkett G. III"/>
            <person name="Bloch C.A."/>
            <person name="Perna N.T."/>
            <person name="Burland V."/>
            <person name="Riley M."/>
            <person name="Collado-Vides J."/>
            <person name="Glasner J.D."/>
            <person name="Rode C.K."/>
            <person name="Mayhew G.F."/>
            <person name="Gregor J."/>
            <person name="Davis N.W."/>
            <person name="Kirkpatrick H.A."/>
            <person name="Goeden M.A."/>
            <person name="Rose D.J."/>
            <person name="Mau B."/>
            <person name="Shao Y."/>
        </authorList>
    </citation>
    <scope>NUCLEOTIDE SEQUENCE [LARGE SCALE GENOMIC DNA]</scope>
    <source>
        <strain>K12 / MG1655 / ATCC 47076</strain>
    </source>
</reference>
<reference key="4">
    <citation type="journal article" date="2006" name="Mol. Syst. Biol.">
        <title>Highly accurate genome sequences of Escherichia coli K-12 strains MG1655 and W3110.</title>
        <authorList>
            <person name="Hayashi K."/>
            <person name="Morooka N."/>
            <person name="Yamamoto Y."/>
            <person name="Fujita K."/>
            <person name="Isono K."/>
            <person name="Choi S."/>
            <person name="Ohtsubo E."/>
            <person name="Baba T."/>
            <person name="Wanner B.L."/>
            <person name="Mori H."/>
            <person name="Horiuchi T."/>
        </authorList>
    </citation>
    <scope>NUCLEOTIDE SEQUENCE [LARGE SCALE GENOMIC DNA]</scope>
    <source>
        <strain>K12 / W3110 / ATCC 27325 / DSM 5911</strain>
    </source>
</reference>
<reference key="5">
    <citation type="journal article" date="1990" name="Appl. Environ. Microbiol.">
        <title>Stereospecific production of the herbicide phosphinothricin (glufosinate) by transamination: isolation and characterization of a phosphinothricin-specific transaminase from Escherichia coli.</title>
        <authorList>
            <person name="Schulz A."/>
            <person name="Taggeselle P."/>
            <person name="Tripier D."/>
            <person name="Bartsch K."/>
        </authorList>
    </citation>
    <scope>PROTEIN SEQUENCE OF 1-30</scope>
    <source>
        <strain>K12</strain>
    </source>
</reference>
<reference key="6">
    <citation type="journal article" date="2002" name="J. Bacteriol.">
        <title>The Escherichia coli gabDTPC operon: specific gamma-aminobutyrate catabolism and nonspecific induction.</title>
        <authorList>
            <person name="Schneider B.L."/>
            <person name="Ruback S."/>
            <person name="Kiupakis A.K."/>
            <person name="Kasbarian H."/>
            <person name="Pybus C."/>
            <person name="Reitzer L."/>
        </authorList>
    </citation>
    <scope>FUNCTION</scope>
    <scope>DISRUPTION PHENOTYPE</scope>
    <scope>PATHWAY</scope>
    <scope>INDUCTION</scope>
    <source>
        <strain>K12</strain>
    </source>
</reference>
<reference key="7">
    <citation type="journal article" date="2004" name="Mol. Microbiol.">
        <title>Multiple stress signal integration in the regulation of the complex sigma S-dependent csiD-ygaF-gabDTP operon in Escherichia coli.</title>
        <authorList>
            <person name="Metzner M."/>
            <person name="Germer J."/>
            <person name="Hengge R."/>
        </authorList>
    </citation>
    <scope>INDUCTION</scope>
    <source>
        <strain>K12 / MC4100 / ATCC 35695 / DSM 6574</strain>
    </source>
</reference>
<reference key="8">
    <citation type="journal article" date="2010" name="J. Bacteriol.">
        <title>A putrescine-inducible pathway comprising PuuE-YneI in which gamma-aminobutyrate is degraded into succinate in Escherichia coli K-12.</title>
        <authorList>
            <person name="Kurihara S."/>
            <person name="Kato K."/>
            <person name="Asada K."/>
            <person name="Kumagai H."/>
            <person name="Suzuki H."/>
        </authorList>
    </citation>
    <scope>DISRUPTION PHENOTYPE</scope>
    <source>
        <strain>K12</strain>
    </source>
</reference>
<reference key="9">
    <citation type="journal article" date="2018" name="Nat. Commun.">
        <title>Widespread bacterial lysine degradation proceeding via glutarate and L-2-hydroxyglutarate.</title>
        <authorList>
            <person name="Knorr S."/>
            <person name="Sinn M."/>
            <person name="Galetskiy D."/>
            <person name="Williams R.M."/>
            <person name="Wang C."/>
            <person name="Mueller N."/>
            <person name="Mayans O."/>
            <person name="Schleheck D."/>
            <person name="Hartig J.S."/>
        </authorList>
    </citation>
    <scope>FUNCTION</scope>
    <scope>CATALYTIC ACTIVITY</scope>
    <scope>PATHWAY</scope>
    <source>
        <strain>K12 / BW25113</strain>
    </source>
</reference>
<reference evidence="9 10" key="10">
    <citation type="journal article" date="2004" name="Biochemistry">
        <title>Crystal structures of unbound and aminooxyacetate-bound Escherichia coli gamma-aminobutyrate aminotransferase.</title>
        <authorList>
            <person name="Liu W."/>
            <person name="Peterson P.E."/>
            <person name="Carter R.J."/>
            <person name="Zhou X."/>
            <person name="Langston J.A."/>
            <person name="Fisher A.J."/>
            <person name="Toney M.D."/>
        </authorList>
    </citation>
    <scope>X-RAY CRYSTALLOGRAPHY (1.90 ANGSTROMS) IN COMPLEX WITH PYRIDOXAL 5'-PHOSPHATE OR THE AMINOOXYACETATE INHIBITOR</scope>
    <scope>COFACTOR</scope>
    <scope>SUBUNIT</scope>
    <source>
        <strain>K12</strain>
    </source>
</reference>
<reference evidence="11 12 13" key="11">
    <citation type="journal article" date="2005" name="Biochemistry">
        <title>Kinetic and crystallographic analysis of active site mutants of Escherichia coli gamma-aminobutyrate aminotransferase.</title>
        <authorList>
            <person name="Liu W."/>
            <person name="Peterson P.E."/>
            <person name="Langston J.A."/>
            <person name="Jin X."/>
            <person name="Zhou X."/>
            <person name="Fisher A.J."/>
            <person name="Toney M.D."/>
        </authorList>
    </citation>
    <scope>X-RAY CRYSTALLOGRAPHY (2.10 ANGSTROMS) OF MUTANTS GLN-50; SER-211 AND ALA-241 IN COMPLEX WITH PYRIDOXAL 5'-PHOSPHATE</scope>
    <scope>FUNCTION</scope>
    <scope>CATALYTIC ACTIVITY</scope>
    <scope>BIOPHYSICOCHEMICAL PROPERTIES</scope>
    <scope>COFACTOR</scope>
    <scope>SUBUNIT</scope>
    <scope>MUTAGENESIS OF ILE-50; GLU-211 AND VAL-241</scope>
    <scope>REACTION MECHANISM</scope>
    <source>
        <strain>K12</strain>
    </source>
</reference>
<dbReference type="EC" id="2.6.1.19" evidence="4 6"/>
<dbReference type="EC" id="2.6.1.48" evidence="6"/>
<dbReference type="EMBL" id="M88334">
    <property type="protein sequence ID" value="AAC36832.1"/>
    <property type="molecule type" value="Genomic_DNA"/>
</dbReference>
<dbReference type="EMBL" id="U00096">
    <property type="protein sequence ID" value="AAC75709.1"/>
    <property type="molecule type" value="Genomic_DNA"/>
</dbReference>
<dbReference type="EMBL" id="AP009048">
    <property type="protein sequence ID" value="BAA16525.1"/>
    <property type="molecule type" value="Genomic_DNA"/>
</dbReference>
<dbReference type="PIR" id="A37846">
    <property type="entry name" value="A37846"/>
</dbReference>
<dbReference type="RefSeq" id="NP_417148.1">
    <property type="nucleotide sequence ID" value="NC_000913.3"/>
</dbReference>
<dbReference type="RefSeq" id="WP_001087611.1">
    <property type="nucleotide sequence ID" value="NZ_LN832404.1"/>
</dbReference>
<dbReference type="PDB" id="1SF2">
    <property type="method" value="X-ray"/>
    <property type="resolution" value="2.40 A"/>
    <property type="chains" value="A/B/C/D=1-426"/>
</dbReference>
<dbReference type="PDB" id="1SFF">
    <property type="method" value="X-ray"/>
    <property type="resolution" value="1.90 A"/>
    <property type="chains" value="A/B/C/D=1-426"/>
</dbReference>
<dbReference type="PDB" id="1SZK">
    <property type="method" value="X-ray"/>
    <property type="resolution" value="2.52 A"/>
    <property type="chains" value="A/B/C/D=1-426"/>
</dbReference>
<dbReference type="PDB" id="1SZS">
    <property type="method" value="X-ray"/>
    <property type="resolution" value="2.10 A"/>
    <property type="chains" value="A/B/C/D=1-426"/>
</dbReference>
<dbReference type="PDB" id="1SZU">
    <property type="method" value="X-ray"/>
    <property type="resolution" value="2.52 A"/>
    <property type="chains" value="A/B/C/D=1-426"/>
</dbReference>
<dbReference type="PDBsum" id="1SF2"/>
<dbReference type="PDBsum" id="1SFF"/>
<dbReference type="PDBsum" id="1SZK"/>
<dbReference type="PDBsum" id="1SZS"/>
<dbReference type="PDBsum" id="1SZU"/>
<dbReference type="SMR" id="P22256"/>
<dbReference type="BioGRID" id="4259210">
    <property type="interactions" value="35"/>
</dbReference>
<dbReference type="BioGRID" id="852375">
    <property type="interactions" value="2"/>
</dbReference>
<dbReference type="DIP" id="DIP-9725N"/>
<dbReference type="FunCoup" id="P22256">
    <property type="interactions" value="590"/>
</dbReference>
<dbReference type="IntAct" id="P22256">
    <property type="interactions" value="12"/>
</dbReference>
<dbReference type="STRING" id="511145.b2662"/>
<dbReference type="DrugBank" id="DB02783">
    <property type="generic name" value="4'-Deoxy-4'-Acetylyamino-Pyridoxal-5'-Phosphate"/>
</dbReference>
<dbReference type="DrugBank" id="DB02142">
    <property type="generic name" value="Pyridoxamine-5'-Phosphate"/>
</dbReference>
<dbReference type="jPOST" id="P22256"/>
<dbReference type="PaxDb" id="511145-b2662"/>
<dbReference type="EnsemblBacteria" id="AAC75709">
    <property type="protein sequence ID" value="AAC75709"/>
    <property type="gene ID" value="b2662"/>
</dbReference>
<dbReference type="GeneID" id="948067"/>
<dbReference type="KEGG" id="ecj:JW2637"/>
<dbReference type="KEGG" id="eco:b2662"/>
<dbReference type="KEGG" id="ecoc:C3026_14675"/>
<dbReference type="PATRIC" id="fig|1411691.4.peg.4079"/>
<dbReference type="EchoBASE" id="EB0356"/>
<dbReference type="eggNOG" id="COG0160">
    <property type="taxonomic scope" value="Bacteria"/>
</dbReference>
<dbReference type="HOGENOM" id="CLU_016922_10_0_6"/>
<dbReference type="InParanoid" id="P22256"/>
<dbReference type="OMA" id="GAIETMK"/>
<dbReference type="OrthoDB" id="9801052at2"/>
<dbReference type="PhylomeDB" id="P22256"/>
<dbReference type="BioCyc" id="EcoCyc:GABATRANSAM-MONOMER"/>
<dbReference type="BioCyc" id="MetaCyc:GABATRANSAM-MONOMER"/>
<dbReference type="BRENDA" id="2.6.1.19">
    <property type="organism ID" value="2026"/>
</dbReference>
<dbReference type="SABIO-RK" id="P22256"/>
<dbReference type="UniPathway" id="UPA00733"/>
<dbReference type="EvolutionaryTrace" id="P22256"/>
<dbReference type="PRO" id="PR:P22256"/>
<dbReference type="Proteomes" id="UP000000625">
    <property type="component" value="Chromosome"/>
</dbReference>
<dbReference type="GO" id="GO:0005829">
    <property type="term" value="C:cytosol"/>
    <property type="evidence" value="ECO:0000314"/>
    <property type="project" value="EcoCyc"/>
</dbReference>
<dbReference type="GO" id="GO:0034386">
    <property type="term" value="F:4-aminobutyrate:2-oxoglutarate transaminase activity"/>
    <property type="evidence" value="ECO:0000314"/>
    <property type="project" value="EcoCyc"/>
</dbReference>
<dbReference type="GO" id="GO:0047589">
    <property type="term" value="F:5-aminovalerate transaminase activity"/>
    <property type="evidence" value="ECO:0000314"/>
    <property type="project" value="EcoCyc"/>
</dbReference>
<dbReference type="GO" id="GO:0003992">
    <property type="term" value="F:N2-acetyl-L-ornithine:2-oxoglutarate 5-aminotransferase activity"/>
    <property type="evidence" value="ECO:0000314"/>
    <property type="project" value="EcoCyc"/>
</dbReference>
<dbReference type="GO" id="GO:0042803">
    <property type="term" value="F:protein homodimerization activity"/>
    <property type="evidence" value="ECO:0000314"/>
    <property type="project" value="EcoCyc"/>
</dbReference>
<dbReference type="GO" id="GO:0030170">
    <property type="term" value="F:pyridoxal phosphate binding"/>
    <property type="evidence" value="ECO:0000314"/>
    <property type="project" value="EcoCyc"/>
</dbReference>
<dbReference type="GO" id="GO:0042450">
    <property type="term" value="P:arginine biosynthetic process via ornithine"/>
    <property type="evidence" value="ECO:0000316"/>
    <property type="project" value="EcoCyc"/>
</dbReference>
<dbReference type="GO" id="GO:0009450">
    <property type="term" value="P:gamma-aminobutyric acid catabolic process"/>
    <property type="evidence" value="ECO:0000315"/>
    <property type="project" value="EcoCyc"/>
</dbReference>
<dbReference type="CDD" id="cd00610">
    <property type="entry name" value="OAT_like"/>
    <property type="match status" value="1"/>
</dbReference>
<dbReference type="FunFam" id="3.40.640.10:FF:000013">
    <property type="entry name" value="4-aminobutyrate aminotransferase"/>
    <property type="match status" value="1"/>
</dbReference>
<dbReference type="FunFam" id="3.90.1150.10:FF:000022">
    <property type="entry name" value="4-aminobutyrate aminotransferase"/>
    <property type="match status" value="1"/>
</dbReference>
<dbReference type="Gene3D" id="3.90.1150.10">
    <property type="entry name" value="Aspartate Aminotransferase, domain 1"/>
    <property type="match status" value="1"/>
</dbReference>
<dbReference type="Gene3D" id="3.40.640.10">
    <property type="entry name" value="Type I PLP-dependent aspartate aminotransferase-like (Major domain)"/>
    <property type="match status" value="1"/>
</dbReference>
<dbReference type="InterPro" id="IPR004632">
    <property type="entry name" value="4NH2But_aminotransferase_bac"/>
</dbReference>
<dbReference type="InterPro" id="IPR005814">
    <property type="entry name" value="Aminotrans_3"/>
</dbReference>
<dbReference type="InterPro" id="IPR049704">
    <property type="entry name" value="Aminotrans_3_PPA_site"/>
</dbReference>
<dbReference type="InterPro" id="IPR050103">
    <property type="entry name" value="Class-III_PLP-dep_AT"/>
</dbReference>
<dbReference type="InterPro" id="IPR015424">
    <property type="entry name" value="PyrdxlP-dep_Trfase"/>
</dbReference>
<dbReference type="InterPro" id="IPR015421">
    <property type="entry name" value="PyrdxlP-dep_Trfase_major"/>
</dbReference>
<dbReference type="InterPro" id="IPR015422">
    <property type="entry name" value="PyrdxlP-dep_Trfase_small"/>
</dbReference>
<dbReference type="NCBIfam" id="TIGR00700">
    <property type="entry name" value="GABAtrnsam"/>
    <property type="match status" value="1"/>
</dbReference>
<dbReference type="NCBIfam" id="NF005985">
    <property type="entry name" value="PRK08088.1"/>
    <property type="match status" value="1"/>
</dbReference>
<dbReference type="PANTHER" id="PTHR11986">
    <property type="entry name" value="AMINOTRANSFERASE CLASS III"/>
    <property type="match status" value="1"/>
</dbReference>
<dbReference type="Pfam" id="PF00202">
    <property type="entry name" value="Aminotran_3"/>
    <property type="match status" value="1"/>
</dbReference>
<dbReference type="PIRSF" id="PIRSF000521">
    <property type="entry name" value="Transaminase_4ab_Lys_Orn"/>
    <property type="match status" value="1"/>
</dbReference>
<dbReference type="SUPFAM" id="SSF53383">
    <property type="entry name" value="PLP-dependent transferases"/>
    <property type="match status" value="1"/>
</dbReference>
<dbReference type="PROSITE" id="PS00600">
    <property type="entry name" value="AA_TRANSFER_CLASS_3"/>
    <property type="match status" value="1"/>
</dbReference>
<protein>
    <recommendedName>
        <fullName>4-aminobutyrate aminotransferase GabT</fullName>
        <ecNumber evidence="4 6">2.6.1.19</ecNumber>
    </recommendedName>
    <alternativeName>
        <fullName evidence="8">5-aminovalerate transaminase</fullName>
        <ecNumber evidence="6">2.6.1.48</ecNumber>
    </alternativeName>
    <alternativeName>
        <fullName>GABA aminotransferase</fullName>
        <shortName>GABA-AT</shortName>
    </alternativeName>
    <alternativeName>
        <fullName>Gamma-amino-N-butyrate transaminase</fullName>
        <shortName>GABA transaminase</shortName>
    </alternativeName>
    <alternativeName>
        <fullName>Glutamate:succinic semialdehyde transaminase</fullName>
    </alternativeName>
    <alternativeName>
        <fullName>L-AIBAT</fullName>
    </alternativeName>
</protein>
<gene>
    <name type="primary">gabT</name>
    <name type="ordered locus">b2662</name>
    <name type="ordered locus">JW2637</name>
</gene>
<evidence type="ECO:0000269" key="1">
    <source>
    </source>
</evidence>
<evidence type="ECO:0000269" key="2">
    <source>
    </source>
</evidence>
<evidence type="ECO:0000269" key="3">
    <source>
    </source>
</evidence>
<evidence type="ECO:0000269" key="4">
    <source>
    </source>
</evidence>
<evidence type="ECO:0000269" key="5">
    <source>
    </source>
</evidence>
<evidence type="ECO:0000269" key="6">
    <source>
    </source>
</evidence>
<evidence type="ECO:0000305" key="7"/>
<evidence type="ECO:0000305" key="8">
    <source>
    </source>
</evidence>
<evidence type="ECO:0007744" key="9">
    <source>
        <dbReference type="PDB" id="1SF2"/>
    </source>
</evidence>
<evidence type="ECO:0007744" key="10">
    <source>
        <dbReference type="PDB" id="1SFF"/>
    </source>
</evidence>
<evidence type="ECO:0007744" key="11">
    <source>
        <dbReference type="PDB" id="1SZK"/>
    </source>
</evidence>
<evidence type="ECO:0007744" key="12">
    <source>
        <dbReference type="PDB" id="1SZS"/>
    </source>
</evidence>
<evidence type="ECO:0007744" key="13">
    <source>
        <dbReference type="PDB" id="1SZU"/>
    </source>
</evidence>
<evidence type="ECO:0007829" key="14">
    <source>
        <dbReference type="PDB" id="1SFF"/>
    </source>
</evidence>
<evidence type="ECO:0007829" key="15">
    <source>
        <dbReference type="PDB" id="1SZK"/>
    </source>
</evidence>
<sequence>MNSNKELMQRRSQAIPRGVGQIHPIFADRAENCRVWDVEGREYLDFAGGIAVLNTGHLHPKVVAAVEAQLKKLSHTCFQVLAYEPYLELCEIMNQKVPGDFAKKTLLVTTGSEAVENAVKIARAATKRSGTIAFSGAYHGRTHYTLALTGKVNPYSAGMGLMPGHVYRALYPCPLHGISEDDAIASIHRIFKNDAAPEDIAAIVIEPVQGEGGFYASSPAFMQRLRALCDEHGIMLIADEVQSGAGRTGTLFAMEQMGVAPDLTTFAKSIAGGFPLAGVTGRAEVMDAVAPGGLGGTYAGNPIACVAALEVLKVFEQENLLQKANDLGQKLKDGLLAIAEKHPEIGDVRGLGAMIAIELFEDGDHNKPDAKLTAEIVARARDKGLILLSCGPYYNVLRILVPLTIEDAQIRQGLEIISQCFDEAKQ</sequence>
<comment type="function">
    <text evidence="1 4 6">Pyridoxal phosphate-dependent enzyme that catalyzes transamination between primary amines and alpha-keto acids. Catalyzes the transfer of the amino group from gamma-aminobutyrate (GABA) to alpha-ketoglutarate (KG) to yield succinic semialdehyde (SSA) and glutamate (PubMed:15723541, PubMed:30498244). Thereby functions in a GABA degradation pathway that allows some E.coli strains to utilize GABA as a nitrogen source for growth (PubMed:12446648). Also catalyzes the conversion of 5-aminovalerate to glutarate semialdehyde, as part of a L-lysine degradation pathway that proceeds via cadaverine, glutarate and L-2-hydroxyglutarate (PubMed:30498244).</text>
</comment>
<comment type="catalytic activity">
    <reaction evidence="4 6">
        <text>4-aminobutanoate + 2-oxoglutarate = succinate semialdehyde + L-glutamate</text>
        <dbReference type="Rhea" id="RHEA:23352"/>
        <dbReference type="ChEBI" id="CHEBI:16810"/>
        <dbReference type="ChEBI" id="CHEBI:29985"/>
        <dbReference type="ChEBI" id="CHEBI:57706"/>
        <dbReference type="ChEBI" id="CHEBI:59888"/>
        <dbReference type="EC" id="2.6.1.19"/>
    </reaction>
    <physiologicalReaction direction="left-to-right" evidence="1">
        <dbReference type="Rhea" id="RHEA:23353"/>
    </physiologicalReaction>
</comment>
<comment type="catalytic activity">
    <reaction evidence="6">
        <text>5-aminopentanoate + 2-oxoglutarate = 5-oxopentanoate + L-glutamate</text>
        <dbReference type="Rhea" id="RHEA:10212"/>
        <dbReference type="ChEBI" id="CHEBI:16120"/>
        <dbReference type="ChEBI" id="CHEBI:16810"/>
        <dbReference type="ChEBI" id="CHEBI:29985"/>
        <dbReference type="ChEBI" id="CHEBI:356010"/>
        <dbReference type="EC" id="2.6.1.48"/>
    </reaction>
    <physiologicalReaction direction="left-to-right" evidence="8">
        <dbReference type="Rhea" id="RHEA:10213"/>
    </physiologicalReaction>
</comment>
<comment type="cofactor">
    <cofactor evidence="3 4">
        <name>pyridoxal 5'-phosphate</name>
        <dbReference type="ChEBI" id="CHEBI:597326"/>
    </cofactor>
</comment>
<comment type="biophysicochemical properties">
    <kinetics>
        <KM evidence="6">197 uM for 4-aminobutanoate (measured for a coupled GabT/GabD reaction)</KM>
        <KM evidence="6">439 uM for 5-aminopentanoate (measured for a coupled GabT/GabD reaction)</KM>
        <KM evidence="4">5.8 mM for 4-aminobutanoate (at 25 degrees Celsius and pH 7.8)</KM>
        <KM evidence="4">1.07 mM for 2-oxoglutarate (at 25 degrees Celsius and pH 7.8)</KM>
        <text evidence="4">kcat is 47.4 sec(-1) with 4-aminobutanoate as substrate (at 25 degrees Celsius and pH 7.8).</text>
    </kinetics>
</comment>
<comment type="pathway">
    <text evidence="1">Amino-acid degradation; 4-aminobutanoate degradation.</text>
</comment>
<comment type="pathway">
    <text evidence="8">Amino-acid degradation.</text>
</comment>
<comment type="subunit">
    <text evidence="3 4">Homotetramer.</text>
</comment>
<comment type="induction">
    <text evidence="1 2">Induced by RpoS in response to multiple stress conditions, including shifts to acidic pH or high osmolarity as well as starvation or stationary phase. Catabolite repression by glucose (repression relieved by GABA) (PubMed:14731280). Makes part of the gabDTPC operon, which is up-regulated by nitrogen limitation (PubMed:12446648).</text>
</comment>
<comment type="disruption phenotype">
    <text evidence="1 5">Cells lacking this gene are not able to utilize GABA as a nitrogen source, in contrast to wild-type, but grow normally with arginine, ornithine, putrescine and agmatine (PubMed:12446648). Cells show only 68% of the wild-type GABA aminotransferase activity (PubMed:20639325).</text>
</comment>
<comment type="similarity">
    <text evidence="7">Belongs to the class-III pyridoxal-phosphate-dependent aminotransferase family.</text>
</comment>
<accession>P22256</accession>
<feature type="chain" id="PRO_0000120384" description="4-aminobutyrate aminotransferase GabT">
    <location>
        <begin position="1"/>
        <end position="426"/>
    </location>
</feature>
<feature type="binding site" evidence="3 4">
    <location>
        <begin position="111"/>
        <end position="112"/>
    </location>
    <ligand>
        <name>pyridoxal 5'-phosphate</name>
        <dbReference type="ChEBI" id="CHEBI:597326"/>
    </ligand>
</feature>
<feature type="binding site" evidence="3 4">
    <location>
        <position position="242"/>
    </location>
    <ligand>
        <name>pyridoxal 5'-phosphate</name>
        <dbReference type="ChEBI" id="CHEBI:597326"/>
    </ligand>
</feature>
<feature type="binding site" evidence="3 4">
    <location>
        <position position="297"/>
    </location>
    <ligand>
        <name>pyridoxal 5'-phosphate</name>
        <dbReference type="ChEBI" id="CHEBI:597326"/>
    </ligand>
</feature>
<feature type="modified residue" description="N6-(pyridoxal phosphate)lysine" evidence="3 4 9 12 13">
    <location>
        <position position="268"/>
    </location>
</feature>
<feature type="mutagenesis site" description="3-fold decrease in catalytic activity and 12-fold decrease in affinity for GABA." evidence="4">
    <original>I</original>
    <variation>Q</variation>
    <location>
        <position position="50"/>
    </location>
</feature>
<feature type="mutagenesis site" description="100-fold decrease in catalytic activity and 15-fold decrease in affinity for GABA." evidence="4">
    <original>E</original>
    <variation>S</variation>
    <location>
        <position position="211"/>
    </location>
</feature>
<feature type="mutagenesis site" description="25-fold decrease in catalytic activity and 5-fold decrease in affinity for GABA." evidence="4">
    <original>V</original>
    <variation>A</variation>
    <location>
        <position position="241"/>
    </location>
</feature>
<feature type="helix" evidence="14">
    <location>
        <begin position="4"/>
        <end position="14"/>
    </location>
</feature>
<feature type="strand" evidence="14">
    <location>
        <begin position="22"/>
        <end position="32"/>
    </location>
</feature>
<feature type="strand" evidence="14">
    <location>
        <begin position="34"/>
        <end position="37"/>
    </location>
</feature>
<feature type="strand" evidence="14">
    <location>
        <begin position="42"/>
        <end position="47"/>
    </location>
</feature>
<feature type="helix" evidence="14">
    <location>
        <begin position="48"/>
        <end position="51"/>
    </location>
</feature>
<feature type="helix" evidence="14">
    <location>
        <begin position="60"/>
        <end position="69"/>
    </location>
</feature>
<feature type="turn" evidence="14">
    <location>
        <begin position="70"/>
        <end position="72"/>
    </location>
</feature>
<feature type="turn" evidence="14">
    <location>
        <begin position="78"/>
        <end position="80"/>
    </location>
</feature>
<feature type="helix" evidence="14">
    <location>
        <begin position="84"/>
        <end position="96"/>
    </location>
</feature>
<feature type="strand" evidence="14">
    <location>
        <begin position="103"/>
        <end position="110"/>
    </location>
</feature>
<feature type="helix" evidence="14">
    <location>
        <begin position="111"/>
        <end position="126"/>
    </location>
</feature>
<feature type="strand" evidence="14">
    <location>
        <begin position="130"/>
        <end position="134"/>
    </location>
</feature>
<feature type="helix" evidence="14">
    <location>
        <begin position="143"/>
        <end position="148"/>
    </location>
</feature>
<feature type="turn" evidence="14">
    <location>
        <begin position="153"/>
        <end position="158"/>
    </location>
</feature>
<feature type="strand" evidence="14">
    <location>
        <begin position="164"/>
        <end position="169"/>
    </location>
</feature>
<feature type="helix" evidence="14">
    <location>
        <begin position="174"/>
        <end position="176"/>
    </location>
</feature>
<feature type="helix" evidence="14">
    <location>
        <begin position="180"/>
        <end position="193"/>
    </location>
</feature>
<feature type="helix" evidence="14">
    <location>
        <begin position="197"/>
        <end position="199"/>
    </location>
</feature>
<feature type="strand" evidence="14">
    <location>
        <begin position="200"/>
        <end position="205"/>
    </location>
</feature>
<feature type="turn" evidence="14">
    <location>
        <begin position="210"/>
        <end position="213"/>
    </location>
</feature>
<feature type="helix" evidence="14">
    <location>
        <begin position="219"/>
        <end position="232"/>
    </location>
</feature>
<feature type="strand" evidence="14">
    <location>
        <begin position="235"/>
        <end position="239"/>
    </location>
</feature>
<feature type="turn" evidence="14">
    <location>
        <begin position="241"/>
        <end position="248"/>
    </location>
</feature>
<feature type="strand" evidence="14">
    <location>
        <begin position="249"/>
        <end position="252"/>
    </location>
</feature>
<feature type="helix" evidence="14">
    <location>
        <begin position="253"/>
        <end position="256"/>
    </location>
</feature>
<feature type="strand" evidence="14">
    <location>
        <begin position="262"/>
        <end position="266"/>
    </location>
</feature>
<feature type="helix" evidence="14">
    <location>
        <begin position="268"/>
        <end position="271"/>
    </location>
</feature>
<feature type="strand" evidence="15">
    <location>
        <begin position="273"/>
        <end position="275"/>
    </location>
</feature>
<feature type="strand" evidence="14">
    <location>
        <begin position="277"/>
        <end position="282"/>
    </location>
</feature>
<feature type="helix" evidence="14">
    <location>
        <begin position="283"/>
        <end position="286"/>
    </location>
</feature>
<feature type="strand" evidence="14">
    <location>
        <begin position="297"/>
        <end position="300"/>
    </location>
</feature>
<feature type="helix" evidence="14">
    <location>
        <begin position="302"/>
        <end position="317"/>
    </location>
</feature>
<feature type="helix" evidence="14">
    <location>
        <begin position="320"/>
        <end position="340"/>
    </location>
</feature>
<feature type="strand" evidence="14">
    <location>
        <begin position="345"/>
        <end position="351"/>
    </location>
</feature>
<feature type="strand" evidence="14">
    <location>
        <begin position="354"/>
        <end position="360"/>
    </location>
</feature>
<feature type="helix" evidence="14">
    <location>
        <begin position="361"/>
        <end position="363"/>
    </location>
</feature>
<feature type="helix" evidence="14">
    <location>
        <begin position="370"/>
        <end position="382"/>
    </location>
</feature>
<feature type="strand" evidence="14">
    <location>
        <begin position="388"/>
        <end position="391"/>
    </location>
</feature>
<feature type="strand" evidence="14">
    <location>
        <begin position="396"/>
        <end position="399"/>
    </location>
</feature>
<feature type="helix" evidence="14">
    <location>
        <begin position="407"/>
        <end position="424"/>
    </location>
</feature>
<proteinExistence type="evidence at protein level"/>